<gene>
    <name evidence="1" type="primary">nfi</name>
    <name type="ordered locus">PCC8801_0299</name>
</gene>
<sequence length="229" mass="25420">MKIKATFSCPHSLEEAKTIQENLKKKVILEDQFSEVNYVAGVDVGFRDNYQLTQAAIAVLSFPKLELVETQIACLPTTFPYIPGFLSFREIPAILKALEKLKIPPNIILCDGQGIAHPRRLGIASHLGVLIDLPTIGVAKSLLVGKHEEVPPEKGNWQPLIDKGEIIGVVLRSRTNIKPIYVSIGHKISLPTAIDYVMQCLTKYRLPETTRWADKLASNKGNMINLSKI</sequence>
<proteinExistence type="inferred from homology"/>
<evidence type="ECO:0000255" key="1">
    <source>
        <dbReference type="HAMAP-Rule" id="MF_00801"/>
    </source>
</evidence>
<comment type="function">
    <text evidence="1">DNA repair enzyme involved in the repair of deaminated bases. Selectively cleaves double-stranded DNA at the second phosphodiester bond 3' to a deoxyinosine leaving behind the intact lesion on the nicked DNA.</text>
</comment>
<comment type="catalytic activity">
    <reaction evidence="1">
        <text>Endonucleolytic cleavage at apurinic or apyrimidinic sites to products with a 5'-phosphate.</text>
        <dbReference type="EC" id="3.1.21.7"/>
    </reaction>
</comment>
<comment type="cofactor">
    <cofactor evidence="1">
        <name>Mg(2+)</name>
        <dbReference type="ChEBI" id="CHEBI:18420"/>
    </cofactor>
</comment>
<comment type="subcellular location">
    <subcellularLocation>
        <location evidence="1">Cytoplasm</location>
    </subcellularLocation>
</comment>
<comment type="similarity">
    <text evidence="1">Belongs to the endonuclease V family.</text>
</comment>
<dbReference type="EC" id="3.1.21.7" evidence="1"/>
<dbReference type="EMBL" id="CP001287">
    <property type="protein sequence ID" value="ACK64399.1"/>
    <property type="molecule type" value="Genomic_DNA"/>
</dbReference>
<dbReference type="RefSeq" id="WP_012593676.1">
    <property type="nucleotide sequence ID" value="NC_011726.1"/>
</dbReference>
<dbReference type="SMR" id="B7K379"/>
<dbReference type="STRING" id="41431.PCC8801_0299"/>
<dbReference type="KEGG" id="cyp:PCC8801_0299"/>
<dbReference type="eggNOG" id="COG1515">
    <property type="taxonomic scope" value="Bacteria"/>
</dbReference>
<dbReference type="HOGENOM" id="CLU_047631_1_1_3"/>
<dbReference type="OrthoDB" id="9790916at2"/>
<dbReference type="Proteomes" id="UP000008204">
    <property type="component" value="Chromosome"/>
</dbReference>
<dbReference type="GO" id="GO:0005737">
    <property type="term" value="C:cytoplasm"/>
    <property type="evidence" value="ECO:0007669"/>
    <property type="project" value="UniProtKB-SubCell"/>
</dbReference>
<dbReference type="GO" id="GO:0043737">
    <property type="term" value="F:deoxyribonuclease V activity"/>
    <property type="evidence" value="ECO:0007669"/>
    <property type="project" value="UniProtKB-UniRule"/>
</dbReference>
<dbReference type="GO" id="GO:0000287">
    <property type="term" value="F:magnesium ion binding"/>
    <property type="evidence" value="ECO:0007669"/>
    <property type="project" value="UniProtKB-UniRule"/>
</dbReference>
<dbReference type="GO" id="GO:0016891">
    <property type="term" value="F:RNA endonuclease activity, producing 5'-phosphomonoesters"/>
    <property type="evidence" value="ECO:0007669"/>
    <property type="project" value="TreeGrafter"/>
</dbReference>
<dbReference type="GO" id="GO:0003727">
    <property type="term" value="F:single-stranded RNA binding"/>
    <property type="evidence" value="ECO:0007669"/>
    <property type="project" value="TreeGrafter"/>
</dbReference>
<dbReference type="GO" id="GO:0006281">
    <property type="term" value="P:DNA repair"/>
    <property type="evidence" value="ECO:0007669"/>
    <property type="project" value="UniProtKB-UniRule"/>
</dbReference>
<dbReference type="CDD" id="cd06559">
    <property type="entry name" value="Endonuclease_V"/>
    <property type="match status" value="1"/>
</dbReference>
<dbReference type="Gene3D" id="3.30.2170.10">
    <property type="entry name" value="archaeoglobus fulgidus dsm 4304 superfamily"/>
    <property type="match status" value="1"/>
</dbReference>
<dbReference type="HAMAP" id="MF_00801">
    <property type="entry name" value="Endonuclease_5"/>
    <property type="match status" value="1"/>
</dbReference>
<dbReference type="InterPro" id="IPR007581">
    <property type="entry name" value="Endonuclease-V"/>
</dbReference>
<dbReference type="NCBIfam" id="NF008629">
    <property type="entry name" value="PRK11617.1"/>
    <property type="match status" value="1"/>
</dbReference>
<dbReference type="PANTHER" id="PTHR28511">
    <property type="entry name" value="ENDONUCLEASE V"/>
    <property type="match status" value="1"/>
</dbReference>
<dbReference type="PANTHER" id="PTHR28511:SF1">
    <property type="entry name" value="ENDONUCLEASE V"/>
    <property type="match status" value="1"/>
</dbReference>
<dbReference type="Pfam" id="PF04493">
    <property type="entry name" value="Endonuclease_5"/>
    <property type="match status" value="1"/>
</dbReference>
<keyword id="KW-0963">Cytoplasm</keyword>
<keyword id="KW-0227">DNA damage</keyword>
<keyword id="KW-0234">DNA repair</keyword>
<keyword id="KW-0255">Endonuclease</keyword>
<keyword id="KW-0378">Hydrolase</keyword>
<keyword id="KW-0460">Magnesium</keyword>
<keyword id="KW-0479">Metal-binding</keyword>
<keyword id="KW-0540">Nuclease</keyword>
<keyword id="KW-1185">Reference proteome</keyword>
<reference key="1">
    <citation type="journal article" date="2011" name="MBio">
        <title>Novel metabolic attributes of the genus Cyanothece, comprising a group of unicellular nitrogen-fixing Cyanobacteria.</title>
        <authorList>
            <person name="Bandyopadhyay A."/>
            <person name="Elvitigala T."/>
            <person name="Welsh E."/>
            <person name="Stockel J."/>
            <person name="Liberton M."/>
            <person name="Min H."/>
            <person name="Sherman L.A."/>
            <person name="Pakrasi H.B."/>
        </authorList>
    </citation>
    <scope>NUCLEOTIDE SEQUENCE [LARGE SCALE GENOMIC DNA]</scope>
    <source>
        <strain>PCC 8801 / RF-1</strain>
    </source>
</reference>
<accession>B7K379</accession>
<feature type="chain" id="PRO_1000133867" description="Endonuclease V">
    <location>
        <begin position="1"/>
        <end position="229"/>
    </location>
</feature>
<feature type="binding site" evidence="1">
    <location>
        <position position="43"/>
    </location>
    <ligand>
        <name>Mg(2+)</name>
        <dbReference type="ChEBI" id="CHEBI:18420"/>
    </ligand>
</feature>
<feature type="binding site" evidence="1">
    <location>
        <position position="111"/>
    </location>
    <ligand>
        <name>Mg(2+)</name>
        <dbReference type="ChEBI" id="CHEBI:18420"/>
    </ligand>
</feature>
<feature type="site" description="Interaction with target DNA" evidence="1">
    <location>
        <position position="81"/>
    </location>
</feature>
<organism>
    <name type="scientific">Rippkaea orientalis (strain PCC 8801 / RF-1)</name>
    <name type="common">Cyanothece sp. (strain PCC 8801)</name>
    <dbReference type="NCBI Taxonomy" id="41431"/>
    <lineage>
        <taxon>Bacteria</taxon>
        <taxon>Bacillati</taxon>
        <taxon>Cyanobacteriota</taxon>
        <taxon>Cyanophyceae</taxon>
        <taxon>Oscillatoriophycideae</taxon>
        <taxon>Chroococcales</taxon>
        <taxon>Aphanothecaceae</taxon>
        <taxon>Rippkaea</taxon>
        <taxon>Rippkaea orientalis</taxon>
    </lineage>
</organism>
<protein>
    <recommendedName>
        <fullName evidence="1">Endonuclease V</fullName>
        <ecNumber evidence="1">3.1.21.7</ecNumber>
    </recommendedName>
    <alternativeName>
        <fullName evidence="1">Deoxyinosine 3'endonuclease</fullName>
    </alternativeName>
    <alternativeName>
        <fullName evidence="1">Deoxyribonuclease V</fullName>
        <shortName evidence="1">DNase V</shortName>
    </alternativeName>
</protein>
<name>NFI_RIPO1</name>